<proteinExistence type="inferred from homology"/>
<accession>Q4J945</accession>
<comment type="function">
    <text evidence="1">Allows the formation of correctly charged Gln-tRNA(Gln) through the transamidation of misacylated Glu-tRNA(Gln) in organisms which lack glutaminyl-tRNA synthetase. The reaction takes place in the presence of glutamine and ATP through an activated gamma-phospho-Glu-tRNA(Gln). The GatDE system is specific for glutamate and does not act on aspartate.</text>
</comment>
<comment type="catalytic activity">
    <reaction evidence="1">
        <text>L-glutamyl-tRNA(Gln) + L-glutamine + ATP + H2O = L-glutaminyl-tRNA(Gln) + L-glutamate + ADP + phosphate + H(+)</text>
        <dbReference type="Rhea" id="RHEA:17521"/>
        <dbReference type="Rhea" id="RHEA-COMP:9681"/>
        <dbReference type="Rhea" id="RHEA-COMP:9684"/>
        <dbReference type="ChEBI" id="CHEBI:15377"/>
        <dbReference type="ChEBI" id="CHEBI:15378"/>
        <dbReference type="ChEBI" id="CHEBI:29985"/>
        <dbReference type="ChEBI" id="CHEBI:30616"/>
        <dbReference type="ChEBI" id="CHEBI:43474"/>
        <dbReference type="ChEBI" id="CHEBI:58359"/>
        <dbReference type="ChEBI" id="CHEBI:78520"/>
        <dbReference type="ChEBI" id="CHEBI:78521"/>
        <dbReference type="ChEBI" id="CHEBI:456216"/>
    </reaction>
</comment>
<comment type="subunit">
    <text evidence="1">Heterodimer of GatD and GatE.</text>
</comment>
<comment type="similarity">
    <text evidence="1">Belongs to the GatB/GatE family. GatE subfamily.</text>
</comment>
<comment type="sequence caution" evidence="2">
    <conflict type="erroneous initiation">
        <sequence resource="EMBL-CDS" id="AAY80685"/>
    </conflict>
</comment>
<reference key="1">
    <citation type="journal article" date="2005" name="J. Bacteriol.">
        <title>The genome of Sulfolobus acidocaldarius, a model organism of the Crenarchaeota.</title>
        <authorList>
            <person name="Chen L."/>
            <person name="Bruegger K."/>
            <person name="Skovgaard M."/>
            <person name="Redder P."/>
            <person name="She Q."/>
            <person name="Torarinsson E."/>
            <person name="Greve B."/>
            <person name="Awayez M."/>
            <person name="Zibat A."/>
            <person name="Klenk H.-P."/>
            <person name="Garrett R.A."/>
        </authorList>
    </citation>
    <scope>NUCLEOTIDE SEQUENCE [LARGE SCALE GENOMIC DNA]</scope>
    <source>
        <strain>ATCC 33909 / DSM 639 / JCM 8929 / NBRC 15157 / NCIMB 11770</strain>
    </source>
</reference>
<sequence>MTELDYSKLGLKVGLEIHQQLNTNKKLFCDCSTTLDEKHHGTLQRYLRPSFSEIGEIDTAALFEWQKGKKYLYQIPFNSCLVEADEEPPHGLNREALAVVLAVAMSLESNIVDEIYVMRKIVIDGSDTTGFQRTSIVAMGGQVIVEGKKIGIQTIALEEDAARKISESANETMYSLDRLGIPLIEISTAPDITTPEEAEKVAFRIGQLLRLTGKVKRGIGTIRQDLNVSIQGGVKTEIKGVQRLELIPEIIKNEARRQYELLKIKDELVNKRGLSKTIVENEIKELELTHLFRNTNSKIIKKELEKGGLIYGIKFKGFKGIFGRELMPNRRFGTEIADYVRALAELGGIFHSDELPNYGITSEEVESVKKELGIGENDGFVLVIGDKEKLKVAITKIKERVLYAFVGVPKETRVALDDGTTKFMRPQPGSARMYPETDIIPIKIDESILNFAKSFVPENPETKLRKLIEMGLSKELATEILNSPRLDLFEELSKKYSPKVSPIVIATTLENYIKYAKSKGGDISVITDEVIEEIINALYNDKISKDSIQEILVDYSTSKKPIRNIVDNYAKITDEELNRIIDKILDENKDIINQKGEKAFNVIIGKVMNVVKGRAEGKKVVDTLKLKMKNYPRT</sequence>
<evidence type="ECO:0000255" key="1">
    <source>
        <dbReference type="HAMAP-Rule" id="MF_00588"/>
    </source>
</evidence>
<evidence type="ECO:0000305" key="2"/>
<protein>
    <recommendedName>
        <fullName evidence="1">Glutamyl-tRNA(Gln) amidotransferase subunit E</fullName>
        <shortName evidence="1">Glu-ADT subunit E</shortName>
        <ecNumber evidence="1">6.3.5.-</ecNumber>
    </recommendedName>
</protein>
<gene>
    <name evidence="1" type="primary">gatE</name>
    <name type="ordered locus">Saci_1350</name>
</gene>
<name>GATE_SULAC</name>
<feature type="chain" id="PRO_0000140081" description="Glutamyl-tRNA(Gln) amidotransferase subunit E">
    <location>
        <begin position="1"/>
        <end position="634"/>
    </location>
</feature>
<organism>
    <name type="scientific">Sulfolobus acidocaldarius (strain ATCC 33909 / DSM 639 / JCM 8929 / NBRC 15157 / NCIMB 11770)</name>
    <dbReference type="NCBI Taxonomy" id="330779"/>
    <lineage>
        <taxon>Archaea</taxon>
        <taxon>Thermoproteota</taxon>
        <taxon>Thermoprotei</taxon>
        <taxon>Sulfolobales</taxon>
        <taxon>Sulfolobaceae</taxon>
        <taxon>Sulfolobus</taxon>
    </lineage>
</organism>
<dbReference type="EC" id="6.3.5.-" evidence="1"/>
<dbReference type="EMBL" id="CP000077">
    <property type="protein sequence ID" value="AAY80685.1"/>
    <property type="status" value="ALT_INIT"/>
    <property type="molecule type" value="Genomic_DNA"/>
</dbReference>
<dbReference type="RefSeq" id="WP_015385605.1">
    <property type="nucleotide sequence ID" value="NC_007181.1"/>
</dbReference>
<dbReference type="SMR" id="Q4J945"/>
<dbReference type="STRING" id="330779.Saci_1350"/>
<dbReference type="GeneID" id="14551853"/>
<dbReference type="GeneID" id="78441696"/>
<dbReference type="KEGG" id="sai:Saci_1350"/>
<dbReference type="PATRIC" id="fig|330779.12.peg.1303"/>
<dbReference type="eggNOG" id="arCOG01719">
    <property type="taxonomic scope" value="Archaea"/>
</dbReference>
<dbReference type="HOGENOM" id="CLU_030702_0_0_2"/>
<dbReference type="Proteomes" id="UP000001018">
    <property type="component" value="Chromosome"/>
</dbReference>
<dbReference type="GO" id="GO:0005737">
    <property type="term" value="C:cytoplasm"/>
    <property type="evidence" value="ECO:0007669"/>
    <property type="project" value="InterPro"/>
</dbReference>
<dbReference type="GO" id="GO:0004812">
    <property type="term" value="F:aminoacyl-tRNA ligase activity"/>
    <property type="evidence" value="ECO:0007669"/>
    <property type="project" value="InterPro"/>
</dbReference>
<dbReference type="GO" id="GO:0005524">
    <property type="term" value="F:ATP binding"/>
    <property type="evidence" value="ECO:0007669"/>
    <property type="project" value="UniProtKB-KW"/>
</dbReference>
<dbReference type="GO" id="GO:0050567">
    <property type="term" value="F:glutaminyl-tRNA synthase (glutamine-hydrolyzing) activity"/>
    <property type="evidence" value="ECO:0007669"/>
    <property type="project" value="UniProtKB-UniRule"/>
</dbReference>
<dbReference type="GO" id="GO:0070681">
    <property type="term" value="P:glutaminyl-tRNAGln biosynthesis via transamidation"/>
    <property type="evidence" value="ECO:0007669"/>
    <property type="project" value="TreeGrafter"/>
</dbReference>
<dbReference type="GO" id="GO:0006412">
    <property type="term" value="P:translation"/>
    <property type="evidence" value="ECO:0007669"/>
    <property type="project" value="UniProtKB-UniRule"/>
</dbReference>
<dbReference type="FunFam" id="3.30.1360.30:FF:000003">
    <property type="entry name" value="Glutamyl-tRNA(Gln) amidotransferase subunit E"/>
    <property type="match status" value="1"/>
</dbReference>
<dbReference type="Gene3D" id="1.10.10.410">
    <property type="match status" value="1"/>
</dbReference>
<dbReference type="Gene3D" id="3.30.1360.30">
    <property type="entry name" value="GAD-like domain"/>
    <property type="match status" value="1"/>
</dbReference>
<dbReference type="Gene3D" id="1.10.150.380">
    <property type="entry name" value="GatB domain, N-terminal subdomain"/>
    <property type="match status" value="1"/>
</dbReference>
<dbReference type="HAMAP" id="MF_00588">
    <property type="entry name" value="GatE"/>
    <property type="match status" value="1"/>
</dbReference>
<dbReference type="InterPro" id="IPR017959">
    <property type="entry name" value="Asn/Gln-tRNA_amidoTrfase_suB/E"/>
</dbReference>
<dbReference type="InterPro" id="IPR006075">
    <property type="entry name" value="Asn/Gln-tRNA_Trfase_suB/E_cat"/>
</dbReference>
<dbReference type="InterPro" id="IPR018027">
    <property type="entry name" value="Asn/Gln_amidotransferase"/>
</dbReference>
<dbReference type="InterPro" id="IPR003789">
    <property type="entry name" value="Asn/Gln_tRNA_amidoTrase-B-like"/>
</dbReference>
<dbReference type="InterPro" id="IPR004115">
    <property type="entry name" value="GAD-like_sf"/>
</dbReference>
<dbReference type="InterPro" id="IPR029351">
    <property type="entry name" value="GAD_dom"/>
</dbReference>
<dbReference type="InterPro" id="IPR042114">
    <property type="entry name" value="GatB_C_1"/>
</dbReference>
<dbReference type="InterPro" id="IPR023168">
    <property type="entry name" value="GatB_Yqey_C_2"/>
</dbReference>
<dbReference type="InterPro" id="IPR004414">
    <property type="entry name" value="GatE"/>
</dbReference>
<dbReference type="InterPro" id="IPR017958">
    <property type="entry name" value="Gln-tRNA_amidoTrfase_suB_CS"/>
</dbReference>
<dbReference type="InterPro" id="IPR014746">
    <property type="entry name" value="Gln_synth/guanido_kin_cat_dom"/>
</dbReference>
<dbReference type="NCBIfam" id="TIGR00134">
    <property type="entry name" value="gatE_arch"/>
    <property type="match status" value="1"/>
</dbReference>
<dbReference type="NCBIfam" id="NF003107">
    <property type="entry name" value="PRK04028.1"/>
    <property type="match status" value="1"/>
</dbReference>
<dbReference type="PANTHER" id="PTHR11659">
    <property type="entry name" value="GLUTAMYL-TRNA GLN AMIDOTRANSFERASE SUBUNIT B MITOCHONDRIAL AND PROKARYOTIC PET112-RELATED"/>
    <property type="match status" value="1"/>
</dbReference>
<dbReference type="PANTHER" id="PTHR11659:SF2">
    <property type="entry name" value="GLUTAMYL-TRNA(GLN) AMIDOTRANSFERASE SUBUNIT E"/>
    <property type="match status" value="1"/>
</dbReference>
<dbReference type="Pfam" id="PF02938">
    <property type="entry name" value="GAD"/>
    <property type="match status" value="1"/>
</dbReference>
<dbReference type="Pfam" id="PF02934">
    <property type="entry name" value="GatB_N"/>
    <property type="match status" value="1"/>
</dbReference>
<dbReference type="Pfam" id="PF02637">
    <property type="entry name" value="GatB_Yqey"/>
    <property type="match status" value="1"/>
</dbReference>
<dbReference type="SMART" id="SM00845">
    <property type="entry name" value="GatB_Yqey"/>
    <property type="match status" value="1"/>
</dbReference>
<dbReference type="SUPFAM" id="SSF55261">
    <property type="entry name" value="GAD domain-like"/>
    <property type="match status" value="1"/>
</dbReference>
<dbReference type="SUPFAM" id="SSF89095">
    <property type="entry name" value="GatB/YqeY motif"/>
    <property type="match status" value="1"/>
</dbReference>
<dbReference type="SUPFAM" id="SSF55931">
    <property type="entry name" value="Glutamine synthetase/guanido kinase"/>
    <property type="match status" value="1"/>
</dbReference>
<dbReference type="PROSITE" id="PS01234">
    <property type="entry name" value="GATB"/>
    <property type="match status" value="1"/>
</dbReference>
<keyword id="KW-0067">ATP-binding</keyword>
<keyword id="KW-0436">Ligase</keyword>
<keyword id="KW-0547">Nucleotide-binding</keyword>
<keyword id="KW-0648">Protein biosynthesis</keyword>
<keyword id="KW-1185">Reference proteome</keyword>